<comment type="function">
    <text evidence="1">Catalyzes the transfer of an acyl group from acyl-phosphate (acyl-PO(4)) to glycerol-3-phosphate (G3P) to form lysophosphatidic acid (LPA). This enzyme utilizes acyl-phosphate as fatty acyl donor, but not acyl-CoA or acyl-ACP.</text>
</comment>
<comment type="catalytic activity">
    <reaction evidence="1">
        <text>an acyl phosphate + sn-glycerol 3-phosphate = a 1-acyl-sn-glycero-3-phosphate + phosphate</text>
        <dbReference type="Rhea" id="RHEA:34075"/>
        <dbReference type="ChEBI" id="CHEBI:43474"/>
        <dbReference type="ChEBI" id="CHEBI:57597"/>
        <dbReference type="ChEBI" id="CHEBI:57970"/>
        <dbReference type="ChEBI" id="CHEBI:59918"/>
        <dbReference type="EC" id="2.3.1.275"/>
    </reaction>
</comment>
<comment type="pathway">
    <text evidence="1">Lipid metabolism; phospholipid metabolism.</text>
</comment>
<comment type="subunit">
    <text evidence="1">Probably interacts with PlsX.</text>
</comment>
<comment type="subcellular location">
    <subcellularLocation>
        <location evidence="1">Cell inner membrane</location>
        <topology evidence="1">Multi-pass membrane protein</topology>
    </subcellularLocation>
</comment>
<comment type="similarity">
    <text evidence="1">Belongs to the PlsY family.</text>
</comment>
<sequence length="199" mass="21776">MLIKILYIIITYLCGSIPSAYIVAKANGKVDIRTVGSGNSGATNVFREIGKCAGVITLIADILKGFIPVYFATFIDNSFSYSVAVAAAAMVGHVFTIFLKFKGGKGVATGLGVFFALMRWPSLIALAIFGLAFVFSRYVSLGSICAVISLPLTSYFLGYSTEVVIFTFAITLLIIYRHRTNIKRLIERSENKLRIFKKK</sequence>
<evidence type="ECO:0000255" key="1">
    <source>
        <dbReference type="HAMAP-Rule" id="MF_01043"/>
    </source>
</evidence>
<feature type="chain" id="PRO_1000149590" description="Glycerol-3-phosphate acyltransferase">
    <location>
        <begin position="1"/>
        <end position="199"/>
    </location>
</feature>
<feature type="transmembrane region" description="Helical" evidence="1">
    <location>
        <begin position="3"/>
        <end position="23"/>
    </location>
</feature>
<feature type="transmembrane region" description="Helical" evidence="1">
    <location>
        <begin position="55"/>
        <end position="75"/>
    </location>
</feature>
<feature type="transmembrane region" description="Helical" evidence="1">
    <location>
        <begin position="79"/>
        <end position="99"/>
    </location>
</feature>
<feature type="transmembrane region" description="Helical" evidence="1">
    <location>
        <begin position="113"/>
        <end position="133"/>
    </location>
</feature>
<feature type="transmembrane region" description="Helical" evidence="1">
    <location>
        <begin position="155"/>
        <end position="175"/>
    </location>
</feature>
<dbReference type="EC" id="2.3.1.275" evidence="1"/>
<dbReference type="EMBL" id="AP009510">
    <property type="protein sequence ID" value="BAG13626.1"/>
    <property type="molecule type" value="Genomic_DNA"/>
</dbReference>
<dbReference type="RefSeq" id="WP_015423155.1">
    <property type="nucleotide sequence ID" value="NC_020419.1"/>
</dbReference>
<dbReference type="SMR" id="B1GZE4"/>
<dbReference type="STRING" id="471821.TGRD_143"/>
<dbReference type="KEGG" id="rsd:TGRD_143"/>
<dbReference type="PATRIC" id="fig|471821.5.peg.203"/>
<dbReference type="HOGENOM" id="CLU_081254_7_1_0"/>
<dbReference type="UniPathway" id="UPA00085"/>
<dbReference type="Proteomes" id="UP000001691">
    <property type="component" value="Chromosome"/>
</dbReference>
<dbReference type="GO" id="GO:0005886">
    <property type="term" value="C:plasma membrane"/>
    <property type="evidence" value="ECO:0007669"/>
    <property type="project" value="UniProtKB-SubCell"/>
</dbReference>
<dbReference type="GO" id="GO:0043772">
    <property type="term" value="F:acyl-phosphate glycerol-3-phosphate acyltransferase activity"/>
    <property type="evidence" value="ECO:0007669"/>
    <property type="project" value="UniProtKB-UniRule"/>
</dbReference>
<dbReference type="GO" id="GO:0008654">
    <property type="term" value="P:phospholipid biosynthetic process"/>
    <property type="evidence" value="ECO:0007669"/>
    <property type="project" value="UniProtKB-UniRule"/>
</dbReference>
<dbReference type="HAMAP" id="MF_01043">
    <property type="entry name" value="PlsY"/>
    <property type="match status" value="1"/>
</dbReference>
<dbReference type="InterPro" id="IPR003811">
    <property type="entry name" value="G3P_acylTferase_PlsY"/>
</dbReference>
<dbReference type="NCBIfam" id="TIGR00023">
    <property type="entry name" value="glycerol-3-phosphate 1-O-acyltransferase PlsY"/>
    <property type="match status" value="1"/>
</dbReference>
<dbReference type="PANTHER" id="PTHR30309:SF0">
    <property type="entry name" value="GLYCEROL-3-PHOSPHATE ACYLTRANSFERASE-RELATED"/>
    <property type="match status" value="1"/>
</dbReference>
<dbReference type="PANTHER" id="PTHR30309">
    <property type="entry name" value="INNER MEMBRANE PROTEIN YGIH"/>
    <property type="match status" value="1"/>
</dbReference>
<dbReference type="Pfam" id="PF02660">
    <property type="entry name" value="G3P_acyltransf"/>
    <property type="match status" value="1"/>
</dbReference>
<dbReference type="SMART" id="SM01207">
    <property type="entry name" value="G3P_acyltransf"/>
    <property type="match status" value="1"/>
</dbReference>
<keyword id="KW-0997">Cell inner membrane</keyword>
<keyword id="KW-1003">Cell membrane</keyword>
<keyword id="KW-0444">Lipid biosynthesis</keyword>
<keyword id="KW-0443">Lipid metabolism</keyword>
<keyword id="KW-0472">Membrane</keyword>
<keyword id="KW-0594">Phospholipid biosynthesis</keyword>
<keyword id="KW-1208">Phospholipid metabolism</keyword>
<keyword id="KW-0808">Transferase</keyword>
<keyword id="KW-0812">Transmembrane</keyword>
<keyword id="KW-1133">Transmembrane helix</keyword>
<accession>B1GZE4</accession>
<protein>
    <recommendedName>
        <fullName evidence="1">Glycerol-3-phosphate acyltransferase</fullName>
    </recommendedName>
    <alternativeName>
        <fullName evidence="1">Acyl-PO4 G3P acyltransferase</fullName>
    </alternativeName>
    <alternativeName>
        <fullName evidence="1">Acyl-phosphate--glycerol-3-phosphate acyltransferase</fullName>
    </alternativeName>
    <alternativeName>
        <fullName evidence="1">G3P acyltransferase</fullName>
        <shortName evidence="1">GPAT</shortName>
        <ecNumber evidence="1">2.3.1.275</ecNumber>
    </alternativeName>
    <alternativeName>
        <fullName evidence="1">Lysophosphatidic acid synthase</fullName>
        <shortName evidence="1">LPA synthase</shortName>
    </alternativeName>
</protein>
<reference key="1">
    <citation type="journal article" date="2008" name="Proc. Natl. Acad. Sci. U.S.A.">
        <title>Complete genome of the uncultured termite group 1 bacteria in a single host protist cell.</title>
        <authorList>
            <person name="Hongoh Y."/>
            <person name="Sharma V.K."/>
            <person name="Prakash T."/>
            <person name="Noda S."/>
            <person name="Taylor T.D."/>
            <person name="Kudo T."/>
            <person name="Sakaki Y."/>
            <person name="Toyoda A."/>
            <person name="Hattori M."/>
            <person name="Ohkuma M."/>
        </authorList>
    </citation>
    <scope>NUCLEOTIDE SEQUENCE [LARGE SCALE GENOMIC DNA]</scope>
</reference>
<gene>
    <name evidence="1" type="primary">plsY</name>
    <name type="ordered locus">TGRD_143</name>
</gene>
<name>PLSY_ENDTX</name>
<organism>
    <name type="scientific">Endomicrobium trichonymphae</name>
    <dbReference type="NCBI Taxonomy" id="1408204"/>
    <lineage>
        <taxon>Bacteria</taxon>
        <taxon>Pseudomonadati</taxon>
        <taxon>Elusimicrobiota</taxon>
        <taxon>Endomicrobiia</taxon>
        <taxon>Endomicrobiales</taxon>
        <taxon>Endomicrobiaceae</taxon>
        <taxon>Candidatus Endomicrobiellum</taxon>
    </lineage>
</organism>
<proteinExistence type="inferred from homology"/>